<dbReference type="EC" id="1.5.1.3"/>
<dbReference type="EC" id="2.1.1.45"/>
<dbReference type="EMBL" id="DP000011">
    <property type="protein sequence ID" value="ABA98037.2"/>
    <property type="molecule type" value="Genomic_DNA"/>
</dbReference>
<dbReference type="EMBL" id="AP008218">
    <property type="status" value="NOT_ANNOTATED_CDS"/>
    <property type="molecule type" value="Genomic_DNA"/>
</dbReference>
<dbReference type="EMBL" id="AP014968">
    <property type="status" value="NOT_ANNOTATED_CDS"/>
    <property type="molecule type" value="Genomic_DNA"/>
</dbReference>
<dbReference type="SMR" id="Q2QRX6"/>
<dbReference type="FunCoup" id="Q2QRX6">
    <property type="interactions" value="1411"/>
</dbReference>
<dbReference type="STRING" id="39947.Q2QRX6"/>
<dbReference type="PaxDb" id="39947-Q2QRX6"/>
<dbReference type="eggNOG" id="KOG0673">
    <property type="taxonomic scope" value="Eukaryota"/>
</dbReference>
<dbReference type="eggNOG" id="KOG1324">
    <property type="taxonomic scope" value="Eukaryota"/>
</dbReference>
<dbReference type="InParanoid" id="Q2QRX6"/>
<dbReference type="PlantReactome" id="R-OSA-1119265">
    <property type="pathway name" value="Tetrahydrofolate biosynthesis I"/>
</dbReference>
<dbReference type="PlantReactome" id="R-OSA-1119523">
    <property type="pathway name" value="Tetrahydrofolate biosynthesis II"/>
</dbReference>
<dbReference type="UniPathway" id="UPA00077">
    <property type="reaction ID" value="UER00158"/>
</dbReference>
<dbReference type="Proteomes" id="UP000000763">
    <property type="component" value="Chromosome 12"/>
</dbReference>
<dbReference type="Proteomes" id="UP000059680">
    <property type="component" value="Chromosome 12"/>
</dbReference>
<dbReference type="GO" id="GO:0005829">
    <property type="term" value="C:cytosol"/>
    <property type="evidence" value="ECO:0000318"/>
    <property type="project" value="GO_Central"/>
</dbReference>
<dbReference type="GO" id="GO:0005739">
    <property type="term" value="C:mitochondrion"/>
    <property type="evidence" value="ECO:0000318"/>
    <property type="project" value="GO_Central"/>
</dbReference>
<dbReference type="GO" id="GO:0004146">
    <property type="term" value="F:dihydrofolate reductase activity"/>
    <property type="evidence" value="ECO:0000318"/>
    <property type="project" value="GO_Central"/>
</dbReference>
<dbReference type="GO" id="GO:0004799">
    <property type="term" value="F:thymidylate synthase activity"/>
    <property type="evidence" value="ECO:0000318"/>
    <property type="project" value="GO_Central"/>
</dbReference>
<dbReference type="GO" id="GO:0006231">
    <property type="term" value="P:dTMP biosynthetic process"/>
    <property type="evidence" value="ECO:0000318"/>
    <property type="project" value="GO_Central"/>
</dbReference>
<dbReference type="GO" id="GO:0032259">
    <property type="term" value="P:methylation"/>
    <property type="evidence" value="ECO:0007669"/>
    <property type="project" value="UniProtKB-KW"/>
</dbReference>
<dbReference type="GO" id="GO:0006730">
    <property type="term" value="P:one-carbon metabolic process"/>
    <property type="evidence" value="ECO:0007669"/>
    <property type="project" value="UniProtKB-KW"/>
</dbReference>
<dbReference type="GO" id="GO:0046654">
    <property type="term" value="P:tetrahydrofolate biosynthetic process"/>
    <property type="evidence" value="ECO:0007669"/>
    <property type="project" value="UniProtKB-UniPathway"/>
</dbReference>
<dbReference type="CDD" id="cd00209">
    <property type="entry name" value="DHFR"/>
    <property type="match status" value="1"/>
</dbReference>
<dbReference type="CDD" id="cd00351">
    <property type="entry name" value="TS_Pyrimidine_HMase"/>
    <property type="match status" value="1"/>
</dbReference>
<dbReference type="FunFam" id="3.40.430.10:FF:000003">
    <property type="entry name" value="Bifunctional dihydrofolate reductase-thymidylate synthase"/>
    <property type="match status" value="1"/>
</dbReference>
<dbReference type="FunFam" id="3.30.572.10:FF:000002">
    <property type="entry name" value="Possible thymidylate synthase"/>
    <property type="match status" value="1"/>
</dbReference>
<dbReference type="Gene3D" id="3.40.430.10">
    <property type="entry name" value="Dihydrofolate Reductase, subunit A"/>
    <property type="match status" value="1"/>
</dbReference>
<dbReference type="Gene3D" id="3.30.572.10">
    <property type="entry name" value="Thymidylate synthase/dCMP hydroxymethylase domain"/>
    <property type="match status" value="1"/>
</dbReference>
<dbReference type="HAMAP" id="MF_00008">
    <property type="entry name" value="Thymidy_synth_bact"/>
    <property type="match status" value="1"/>
</dbReference>
<dbReference type="InterPro" id="IPR024072">
    <property type="entry name" value="DHFR-like_dom_sf"/>
</dbReference>
<dbReference type="InterPro" id="IPR012262">
    <property type="entry name" value="DHFR-TS"/>
</dbReference>
<dbReference type="InterPro" id="IPR017925">
    <property type="entry name" value="DHFR_CS"/>
</dbReference>
<dbReference type="InterPro" id="IPR001796">
    <property type="entry name" value="DHFR_dom"/>
</dbReference>
<dbReference type="InterPro" id="IPR045097">
    <property type="entry name" value="Thymidate_synth/dCMP_Mease"/>
</dbReference>
<dbReference type="InterPro" id="IPR023451">
    <property type="entry name" value="Thymidate_synth/dCMP_Mease_dom"/>
</dbReference>
<dbReference type="InterPro" id="IPR036926">
    <property type="entry name" value="Thymidate_synth/dCMP_Mease_sf"/>
</dbReference>
<dbReference type="InterPro" id="IPR000398">
    <property type="entry name" value="Thymidylate_synthase"/>
</dbReference>
<dbReference type="InterPro" id="IPR020940">
    <property type="entry name" value="Thymidylate_synthase_AS"/>
</dbReference>
<dbReference type="NCBIfam" id="NF002497">
    <property type="entry name" value="PRK01827.1-3"/>
    <property type="match status" value="1"/>
</dbReference>
<dbReference type="NCBIfam" id="TIGR03284">
    <property type="entry name" value="thym_sym"/>
    <property type="match status" value="1"/>
</dbReference>
<dbReference type="PANTHER" id="PTHR11548:SF15">
    <property type="entry name" value="BIFUNCTIONAL DIHYDROFOLATE REDUCTASE-THYMIDYLATE SYNTHASE-RELATED"/>
    <property type="match status" value="1"/>
</dbReference>
<dbReference type="PANTHER" id="PTHR11548">
    <property type="entry name" value="THYMIDYLATE SYNTHASE 1"/>
    <property type="match status" value="1"/>
</dbReference>
<dbReference type="Pfam" id="PF00186">
    <property type="entry name" value="DHFR_1"/>
    <property type="match status" value="1"/>
</dbReference>
<dbReference type="Pfam" id="PF00303">
    <property type="entry name" value="Thymidylat_synt"/>
    <property type="match status" value="1"/>
</dbReference>
<dbReference type="PIRSF" id="PIRSF000389">
    <property type="entry name" value="DHFR-TS"/>
    <property type="match status" value="1"/>
</dbReference>
<dbReference type="PRINTS" id="PR00108">
    <property type="entry name" value="THYMDSNTHASE"/>
</dbReference>
<dbReference type="SUPFAM" id="SSF53597">
    <property type="entry name" value="Dihydrofolate reductase-like"/>
    <property type="match status" value="1"/>
</dbReference>
<dbReference type="SUPFAM" id="SSF55831">
    <property type="entry name" value="Thymidylate synthase/dCMP hydroxymethylase"/>
    <property type="match status" value="1"/>
</dbReference>
<dbReference type="PROSITE" id="PS00075">
    <property type="entry name" value="DHFR_1"/>
    <property type="match status" value="1"/>
</dbReference>
<dbReference type="PROSITE" id="PS51330">
    <property type="entry name" value="DHFR_2"/>
    <property type="match status" value="1"/>
</dbReference>
<dbReference type="PROSITE" id="PS00091">
    <property type="entry name" value="THYMIDYLATE_SYNTHASE"/>
    <property type="match status" value="1"/>
</dbReference>
<keyword id="KW-0489">Methyltransferase</keyword>
<keyword id="KW-0511">Multifunctional enzyme</keyword>
<keyword id="KW-0521">NADP</keyword>
<keyword id="KW-0545">Nucleotide biosynthesis</keyword>
<keyword id="KW-0554">One-carbon metabolism</keyword>
<keyword id="KW-0560">Oxidoreductase</keyword>
<keyword id="KW-1185">Reference proteome</keyword>
<keyword id="KW-0808">Transferase</keyword>
<reference key="1">
    <citation type="journal article" date="2005" name="BMC Biol.">
        <title>The sequence of rice chromosomes 11 and 12, rich in disease resistance genes and recent gene duplications.</title>
        <authorList>
            <consortium name="The rice chromosomes 11 and 12 sequencing consortia"/>
        </authorList>
    </citation>
    <scope>NUCLEOTIDE SEQUENCE [LARGE SCALE GENOMIC DNA]</scope>
    <source>
        <strain>cv. Nipponbare</strain>
    </source>
</reference>
<reference key="2">
    <citation type="journal article" date="2005" name="Nature">
        <title>The map-based sequence of the rice genome.</title>
        <authorList>
            <consortium name="International rice genome sequencing project (IRGSP)"/>
        </authorList>
    </citation>
    <scope>NUCLEOTIDE SEQUENCE [LARGE SCALE GENOMIC DNA]</scope>
    <source>
        <strain>cv. Nipponbare</strain>
    </source>
</reference>
<reference key="3">
    <citation type="journal article" date="2008" name="Nucleic Acids Res.">
        <title>The rice annotation project database (RAP-DB): 2008 update.</title>
        <authorList>
            <consortium name="The rice annotation project (RAP)"/>
        </authorList>
    </citation>
    <scope>GENOME REANNOTATION</scope>
    <source>
        <strain>cv. Nipponbare</strain>
    </source>
</reference>
<reference key="4">
    <citation type="journal article" date="2013" name="Rice">
        <title>Improvement of the Oryza sativa Nipponbare reference genome using next generation sequence and optical map data.</title>
        <authorList>
            <person name="Kawahara Y."/>
            <person name="de la Bastide M."/>
            <person name="Hamilton J.P."/>
            <person name="Kanamori H."/>
            <person name="McCombie W.R."/>
            <person name="Ouyang S."/>
            <person name="Schwartz D.C."/>
            <person name="Tanaka T."/>
            <person name="Wu J."/>
            <person name="Zhou S."/>
            <person name="Childs K.L."/>
            <person name="Davidson R.M."/>
            <person name="Lin H."/>
            <person name="Quesada-Ocampo L."/>
            <person name="Vaillancourt B."/>
            <person name="Sakai H."/>
            <person name="Lee S.S."/>
            <person name="Kim J."/>
            <person name="Numa H."/>
            <person name="Itoh T."/>
            <person name="Buell C.R."/>
            <person name="Matsumoto T."/>
        </authorList>
    </citation>
    <scope>GENOME REANNOTATION</scope>
    <source>
        <strain>cv. Nipponbare</strain>
    </source>
</reference>
<evidence type="ECO:0000250" key="1"/>
<evidence type="ECO:0000305" key="2"/>
<name>DRTS_ORYSJ</name>
<gene>
    <name type="ordered locus">Os12g0446900</name>
    <name type="ordered locus">LOC_Os12g26060</name>
</gene>
<accession>Q2QRX6</accession>
<organism>
    <name type="scientific">Oryza sativa subsp. japonica</name>
    <name type="common">Rice</name>
    <dbReference type="NCBI Taxonomy" id="39947"/>
    <lineage>
        <taxon>Eukaryota</taxon>
        <taxon>Viridiplantae</taxon>
        <taxon>Streptophyta</taxon>
        <taxon>Embryophyta</taxon>
        <taxon>Tracheophyta</taxon>
        <taxon>Spermatophyta</taxon>
        <taxon>Magnoliopsida</taxon>
        <taxon>Liliopsida</taxon>
        <taxon>Poales</taxon>
        <taxon>Poaceae</taxon>
        <taxon>BOP clade</taxon>
        <taxon>Oryzoideae</taxon>
        <taxon>Oryzeae</taxon>
        <taxon>Oryzinae</taxon>
        <taxon>Oryza</taxon>
        <taxon>Oryza sativa</taxon>
    </lineage>
</organism>
<sequence length="494" mass="55977">MGIGKDGTLPWKLPGDLKFFKDITVTTSDPSKKNAVVMGRKTWESIPLKFRPLPGRLNVILTRSGSFDFATAENVVICGSLDSALQLLATTPYCLTVEKTFIIGGGEILRQSLNAPACEAIHLTDIESSIECDTFIPPIDLSMFHPWYSSFPVVENGIKHSFISFVRVTKSIAEANDSSGKELTGNDSKKVKFEIENFSFLPKMIFERHEEYQYLNLVQDIIRNGAKKNDRTGTGTVSKFGCQMRFNLRRNFPLLTTKRVFWRGVLEELLWFISGSTNAKVLQEKGIHIWDGNASRQYLDSIGLTQREEGDLGPVYGFQWRHFGAEYTDMHADYVGKGFDQLMDVIDKIKNNPDDRRIILSAWNPTDLKKMALPPCHMFAQFYVENGELSCQMYQRSADMGLGVPFNIASYSLLTCMIAQVCDLSPGDFVHVIGDAHVYRTHVEALEEQMRKQPKPFPILKINPVKKDIDSFVTSDFKLVRYDPHHKIEMKMAV</sequence>
<proteinExistence type="inferred from homology"/>
<protein>
    <recommendedName>
        <fullName>Putative bifunctional dihydrofolate reductase-thymidylate synthase</fullName>
        <shortName>DHFR-TS</shortName>
    </recommendedName>
    <domain>
        <recommendedName>
            <fullName>Dihydrofolate reductase</fullName>
            <ecNumber>1.5.1.3</ecNumber>
        </recommendedName>
    </domain>
    <domain>
        <recommendedName>
            <fullName>Thymidylate synthase</fullName>
            <ecNumber>2.1.1.45</ecNumber>
        </recommendedName>
    </domain>
</protein>
<feature type="chain" id="PRO_0000247485" description="Putative bifunctional dihydrofolate reductase-thymidylate synthase">
    <location>
        <begin position="1"/>
        <end position="494"/>
    </location>
</feature>
<feature type="domain" description="DHFR">
    <location>
        <begin position="1"/>
        <end position="167"/>
    </location>
</feature>
<feature type="region of interest" description="Thymidylate synthase">
    <location>
        <begin position="170"/>
        <end position="494"/>
    </location>
</feature>
<feature type="active site" evidence="1">
    <location>
        <position position="376"/>
    </location>
</feature>
<feature type="binding site" evidence="1">
    <location>
        <begin position="2"/>
        <end position="8"/>
    </location>
    <ligand>
        <name>NADP(+)</name>
        <dbReference type="ChEBI" id="CHEBI:58349"/>
    </ligand>
</feature>
<feature type="binding site" evidence="1">
    <location>
        <position position="16"/>
    </location>
    <ligand>
        <name>substrate</name>
    </ligand>
</feature>
<feature type="binding site" evidence="1">
    <location>
        <begin position="40"/>
        <end position="42"/>
    </location>
    <ligand>
        <name>NADP(+)</name>
        <dbReference type="ChEBI" id="CHEBI:58349"/>
    </ligand>
</feature>
<feature type="binding site" evidence="1">
    <location>
        <begin position="61"/>
        <end position="64"/>
    </location>
    <ligand>
        <name>NADP(+)</name>
        <dbReference type="ChEBI" id="CHEBI:58349"/>
    </ligand>
</feature>
<feature type="binding site" evidence="1">
    <location>
        <position position="103"/>
    </location>
    <ligand>
        <name>substrate</name>
    </ligand>
</feature>
<feature type="binding site" evidence="1">
    <location>
        <begin position="104"/>
        <end position="111"/>
    </location>
    <ligand>
        <name>NADP(+)</name>
        <dbReference type="ChEBI" id="CHEBI:58349"/>
    </ligand>
</feature>
<feature type="binding site" evidence="1">
    <location>
        <position position="124"/>
    </location>
    <ligand>
        <name>substrate</name>
    </ligand>
</feature>
<feature type="binding site" evidence="1">
    <location>
        <position position="231"/>
    </location>
    <ligand>
        <name>dUMP</name>
        <dbReference type="ChEBI" id="CHEBI:246422"/>
    </ligand>
</feature>
<feature type="binding site" evidence="1">
    <location>
        <position position="377"/>
    </location>
    <ligand>
        <name>dUMP</name>
        <dbReference type="ChEBI" id="CHEBI:246422"/>
    </ligand>
</feature>
<feature type="binding site" evidence="1">
    <location>
        <begin position="395"/>
        <end position="399"/>
    </location>
    <ligand>
        <name>dUMP</name>
        <dbReference type="ChEBI" id="CHEBI:246422"/>
    </ligand>
</feature>
<feature type="binding site" evidence="1">
    <location>
        <position position="407"/>
    </location>
    <ligand>
        <name>dUMP</name>
        <dbReference type="ChEBI" id="CHEBI:246422"/>
    </ligand>
</feature>
<feature type="binding site" evidence="1">
    <location>
        <begin position="437"/>
        <end position="439"/>
    </location>
    <ligand>
        <name>dUMP</name>
        <dbReference type="ChEBI" id="CHEBI:246422"/>
    </ligand>
</feature>
<comment type="function">
    <text evidence="1">Bifunctional enzyme. Involved in de novo dTMP biosynthesis. Key enzyme in folate metabolism. Can play two different roles depending on the source of dihydrofolate: de novo synthesis of tetrahydrofolate or recycling of the dihydrofolate released as one of the end products of the TS catalyzed reaction. Catalyzes an essential reaction for de novo glycine and purine synthesis, DNA precursor synthesis, and for the conversion of dUMP to dTMP (By similarity).</text>
</comment>
<comment type="catalytic activity">
    <reaction>
        <text>(6S)-5,6,7,8-tetrahydrofolate + NADP(+) = 7,8-dihydrofolate + NADPH + H(+)</text>
        <dbReference type="Rhea" id="RHEA:15009"/>
        <dbReference type="ChEBI" id="CHEBI:15378"/>
        <dbReference type="ChEBI" id="CHEBI:57451"/>
        <dbReference type="ChEBI" id="CHEBI:57453"/>
        <dbReference type="ChEBI" id="CHEBI:57783"/>
        <dbReference type="ChEBI" id="CHEBI:58349"/>
        <dbReference type="EC" id="1.5.1.3"/>
    </reaction>
</comment>
<comment type="catalytic activity">
    <reaction>
        <text>dUMP + (6R)-5,10-methylene-5,6,7,8-tetrahydrofolate = 7,8-dihydrofolate + dTMP</text>
        <dbReference type="Rhea" id="RHEA:12104"/>
        <dbReference type="ChEBI" id="CHEBI:15636"/>
        <dbReference type="ChEBI" id="CHEBI:57451"/>
        <dbReference type="ChEBI" id="CHEBI:63528"/>
        <dbReference type="ChEBI" id="CHEBI:246422"/>
        <dbReference type="EC" id="2.1.1.45"/>
    </reaction>
</comment>
<comment type="pathway">
    <text>Cofactor biosynthesis; tetrahydrofolate biosynthesis; 5,6,7,8-tetrahydrofolate from 7,8-dihydrofolate: step 1/1.</text>
</comment>
<comment type="similarity">
    <text evidence="2">In the N-terminal section; belongs to the dihydrofolate reductase family.</text>
</comment>
<comment type="similarity">
    <text evidence="2">In the C-terminal section; belongs to the thymidylate synthase family.</text>
</comment>